<evidence type="ECO:0000250" key="1"/>
<evidence type="ECO:0000305" key="2"/>
<reference key="1">
    <citation type="journal article" date="2002" name="Nature">
        <title>Sequence and analysis of chromosome 2 of Dictyostelium discoideum.</title>
        <authorList>
            <person name="Gloeckner G."/>
            <person name="Eichinger L."/>
            <person name="Szafranski K."/>
            <person name="Pachebat J.A."/>
            <person name="Bankier A.T."/>
            <person name="Dear P.H."/>
            <person name="Lehmann R."/>
            <person name="Baumgart C."/>
            <person name="Parra G."/>
            <person name="Abril J.F."/>
            <person name="Guigo R."/>
            <person name="Kumpf K."/>
            <person name="Tunggal B."/>
            <person name="Cox E.C."/>
            <person name="Quail M.A."/>
            <person name="Platzer M."/>
            <person name="Rosenthal A."/>
            <person name="Noegel A.A."/>
        </authorList>
    </citation>
    <scope>NUCLEOTIDE SEQUENCE [LARGE SCALE GENOMIC DNA]</scope>
    <source>
        <strain>AX4</strain>
    </source>
</reference>
<reference key="2">
    <citation type="journal article" date="2005" name="Nature">
        <title>The genome of the social amoeba Dictyostelium discoideum.</title>
        <authorList>
            <person name="Eichinger L."/>
            <person name="Pachebat J.A."/>
            <person name="Gloeckner G."/>
            <person name="Rajandream M.A."/>
            <person name="Sucgang R."/>
            <person name="Berriman M."/>
            <person name="Song J."/>
            <person name="Olsen R."/>
            <person name="Szafranski K."/>
            <person name="Xu Q."/>
            <person name="Tunggal B."/>
            <person name="Kummerfeld S."/>
            <person name="Madera M."/>
            <person name="Konfortov B.A."/>
            <person name="Rivero F."/>
            <person name="Bankier A.T."/>
            <person name="Lehmann R."/>
            <person name="Hamlin N."/>
            <person name="Davies R."/>
            <person name="Gaudet P."/>
            <person name="Fey P."/>
            <person name="Pilcher K."/>
            <person name="Chen G."/>
            <person name="Saunders D."/>
            <person name="Sodergren E.J."/>
            <person name="Davis P."/>
            <person name="Kerhornou A."/>
            <person name="Nie X."/>
            <person name="Hall N."/>
            <person name="Anjard C."/>
            <person name="Hemphill L."/>
            <person name="Bason N."/>
            <person name="Farbrother P."/>
            <person name="Desany B."/>
            <person name="Just E."/>
            <person name="Morio T."/>
            <person name="Rost R."/>
            <person name="Churcher C.M."/>
            <person name="Cooper J."/>
            <person name="Haydock S."/>
            <person name="van Driessche N."/>
            <person name="Cronin A."/>
            <person name="Goodhead I."/>
            <person name="Muzny D.M."/>
            <person name="Mourier T."/>
            <person name="Pain A."/>
            <person name="Lu M."/>
            <person name="Harper D."/>
            <person name="Lindsay R."/>
            <person name="Hauser H."/>
            <person name="James K.D."/>
            <person name="Quiles M."/>
            <person name="Madan Babu M."/>
            <person name="Saito T."/>
            <person name="Buchrieser C."/>
            <person name="Wardroper A."/>
            <person name="Felder M."/>
            <person name="Thangavelu M."/>
            <person name="Johnson D."/>
            <person name="Knights A."/>
            <person name="Loulseged H."/>
            <person name="Mungall K.L."/>
            <person name="Oliver K."/>
            <person name="Price C."/>
            <person name="Quail M.A."/>
            <person name="Urushihara H."/>
            <person name="Hernandez J."/>
            <person name="Rabbinowitsch E."/>
            <person name="Steffen D."/>
            <person name="Sanders M."/>
            <person name="Ma J."/>
            <person name="Kohara Y."/>
            <person name="Sharp S."/>
            <person name="Simmonds M.N."/>
            <person name="Spiegler S."/>
            <person name="Tivey A."/>
            <person name="Sugano S."/>
            <person name="White B."/>
            <person name="Walker D."/>
            <person name="Woodward J.R."/>
            <person name="Winckler T."/>
            <person name="Tanaka Y."/>
            <person name="Shaulsky G."/>
            <person name="Schleicher M."/>
            <person name="Weinstock G.M."/>
            <person name="Rosenthal A."/>
            <person name="Cox E.C."/>
            <person name="Chisholm R.L."/>
            <person name="Gibbs R.A."/>
            <person name="Loomis W.F."/>
            <person name="Platzer M."/>
            <person name="Kay R.R."/>
            <person name="Williams J.G."/>
            <person name="Dear P.H."/>
            <person name="Noegel A.A."/>
            <person name="Barrell B.G."/>
            <person name="Kuspa A."/>
        </authorList>
    </citation>
    <scope>NUCLEOTIDE SEQUENCE [LARGE SCALE GENOMIC DNA]</scope>
    <source>
        <strain>AX4</strain>
    </source>
</reference>
<reference key="3">
    <citation type="journal article" date="2006" name="Mol. Cell. Proteomics">
        <title>Proteomics fingerprinting of phagosome maturation and evidence for the role of a Galpha during uptake.</title>
        <authorList>
            <person name="Gotthardt D."/>
            <person name="Blancheteau V."/>
            <person name="Bosserhoff A."/>
            <person name="Ruppert T."/>
            <person name="Delorenzi M."/>
            <person name="Soldati T."/>
        </authorList>
    </citation>
    <scope>IDENTIFICATION BY MASS SPECTROMETRY [LARGE SCALE ANALYSIS]</scope>
    <source>
        <strain>AX2</strain>
    </source>
</reference>
<keyword id="KW-0375">Hydrogen ion transport</keyword>
<keyword id="KW-0406">Ion transport</keyword>
<keyword id="KW-1185">Reference proteome</keyword>
<keyword id="KW-0813">Transport</keyword>
<comment type="function">
    <text evidence="1">Subunit of the peripheral V1 complex of vacuolar ATPase. Subunit H activates the ATPase activity of the enzyme and couples ATPase activity to proton flow. Vacuolar ATPase is responsible for acidifying a variety of intracellular compartments in eukaryotic cells, thus providing most of the energy required for transport processes in the vacuolar system (By similarity).</text>
</comment>
<comment type="subunit">
    <text evidence="1">V-ATPase is a heteromultimeric enzyme composed of a peripheral catalytic V1 complex (components A to H) attached to an integral membrane V0 proton pore complex (components: a, c, c', c'' and d).</text>
</comment>
<comment type="similarity">
    <text evidence="2">Belongs to the V-ATPase H subunit family.</text>
</comment>
<feature type="chain" id="PRO_0000328461" description="V-type proton ATPase subunit H">
    <location>
        <begin position="1"/>
        <end position="445"/>
    </location>
</feature>
<gene>
    <name type="primary">vatH</name>
    <name type="ORF">DDB_G0274553</name>
</gene>
<proteinExistence type="evidence at protein level"/>
<name>VATH_DICDI</name>
<accession>Q8MML6</accession>
<accession>Q555N2</accession>
<dbReference type="EMBL" id="AC123513">
    <property type="protein sequence ID" value="AAM44365.1"/>
    <property type="molecule type" value="Genomic_DNA"/>
</dbReference>
<dbReference type="EMBL" id="AAFI02000012">
    <property type="protein sequence ID" value="EAL70169.1"/>
    <property type="molecule type" value="Genomic_DNA"/>
</dbReference>
<dbReference type="RefSeq" id="XP_644034.1">
    <property type="nucleotide sequence ID" value="XM_638942.1"/>
</dbReference>
<dbReference type="SMR" id="Q8MML6"/>
<dbReference type="FunCoup" id="Q8MML6">
    <property type="interactions" value="967"/>
</dbReference>
<dbReference type="STRING" id="44689.Q8MML6"/>
<dbReference type="PaxDb" id="44689-DDB0234266"/>
<dbReference type="EnsemblProtists" id="EAL70169">
    <property type="protein sequence ID" value="EAL70169"/>
    <property type="gene ID" value="DDB_G0274553"/>
</dbReference>
<dbReference type="GeneID" id="8619464"/>
<dbReference type="KEGG" id="ddi:DDB_G0274553"/>
<dbReference type="dictyBase" id="DDB_G0274553">
    <property type="gene designation" value="vatH"/>
</dbReference>
<dbReference type="VEuPathDB" id="AmoebaDB:DDB_G0274553"/>
<dbReference type="eggNOG" id="KOG2759">
    <property type="taxonomic scope" value="Eukaryota"/>
</dbReference>
<dbReference type="HOGENOM" id="CLU_025709_4_0_1"/>
<dbReference type="InParanoid" id="Q8MML6"/>
<dbReference type="OMA" id="HSGHLRW"/>
<dbReference type="PhylomeDB" id="Q8MML6"/>
<dbReference type="Reactome" id="R-DDI-1222556">
    <property type="pathway name" value="ROS and RNS production in phagocytes"/>
</dbReference>
<dbReference type="Reactome" id="R-DDI-77387">
    <property type="pathway name" value="Insulin receptor recycling"/>
</dbReference>
<dbReference type="Reactome" id="R-DDI-917977">
    <property type="pathway name" value="Transferrin endocytosis and recycling"/>
</dbReference>
<dbReference type="Reactome" id="R-DDI-9639288">
    <property type="pathway name" value="Amino acids regulate mTORC1"/>
</dbReference>
<dbReference type="PRO" id="PR:Q8MML6"/>
<dbReference type="Proteomes" id="UP000002195">
    <property type="component" value="Chromosome 2"/>
</dbReference>
<dbReference type="GO" id="GO:0031164">
    <property type="term" value="C:contractile vacuolar membrane"/>
    <property type="evidence" value="ECO:0000304"/>
    <property type="project" value="dictyBase"/>
</dbReference>
<dbReference type="GO" id="GO:0140220">
    <property type="term" value="C:pathogen-containing vacuole"/>
    <property type="evidence" value="ECO:0007005"/>
    <property type="project" value="dictyBase"/>
</dbReference>
<dbReference type="GO" id="GO:0045335">
    <property type="term" value="C:phagocytic vesicle"/>
    <property type="evidence" value="ECO:0007005"/>
    <property type="project" value="dictyBase"/>
</dbReference>
<dbReference type="GO" id="GO:0000221">
    <property type="term" value="C:vacuolar proton-transporting V-type ATPase, V1 domain"/>
    <property type="evidence" value="ECO:0007669"/>
    <property type="project" value="InterPro"/>
</dbReference>
<dbReference type="GO" id="GO:0046961">
    <property type="term" value="F:proton-transporting ATPase activity, rotational mechanism"/>
    <property type="evidence" value="ECO:0007669"/>
    <property type="project" value="InterPro"/>
</dbReference>
<dbReference type="FunFam" id="1.25.10.10:FF:000067">
    <property type="entry name" value="V-type proton ATPase subunit H"/>
    <property type="match status" value="1"/>
</dbReference>
<dbReference type="Gene3D" id="1.25.10.10">
    <property type="entry name" value="Leucine-rich Repeat Variant"/>
    <property type="match status" value="1"/>
</dbReference>
<dbReference type="Gene3D" id="1.25.40.150">
    <property type="entry name" value="V-type ATPase, subunit H, C-terminal domain"/>
    <property type="match status" value="1"/>
</dbReference>
<dbReference type="InterPro" id="IPR011989">
    <property type="entry name" value="ARM-like"/>
</dbReference>
<dbReference type="InterPro" id="IPR016024">
    <property type="entry name" value="ARM-type_fold"/>
</dbReference>
<dbReference type="InterPro" id="IPR000225">
    <property type="entry name" value="Armadillo"/>
</dbReference>
<dbReference type="InterPro" id="IPR004908">
    <property type="entry name" value="ATPase_V1-cplx_hsu"/>
</dbReference>
<dbReference type="InterPro" id="IPR011987">
    <property type="entry name" value="ATPase_V1-cplx_hsu_C"/>
</dbReference>
<dbReference type="InterPro" id="IPR038497">
    <property type="entry name" value="ATPase_V1-cplx_hsu_C_sf"/>
</dbReference>
<dbReference type="PANTHER" id="PTHR10698">
    <property type="entry name" value="V-TYPE PROTON ATPASE SUBUNIT H"/>
    <property type="match status" value="1"/>
</dbReference>
<dbReference type="PANTHER" id="PTHR10698:SF0">
    <property type="entry name" value="V-TYPE PROTON ATPASE SUBUNIT H"/>
    <property type="match status" value="1"/>
</dbReference>
<dbReference type="Pfam" id="PF11698">
    <property type="entry name" value="V-ATPase_H_C"/>
    <property type="match status" value="1"/>
</dbReference>
<dbReference type="Pfam" id="PF03224">
    <property type="entry name" value="V-ATPase_H_N"/>
    <property type="match status" value="1"/>
</dbReference>
<dbReference type="PIRSF" id="PIRSF032184">
    <property type="entry name" value="ATPase_V1_H"/>
    <property type="match status" value="1"/>
</dbReference>
<dbReference type="SUPFAM" id="SSF48371">
    <property type="entry name" value="ARM repeat"/>
    <property type="match status" value="1"/>
</dbReference>
<dbReference type="PROSITE" id="PS50176">
    <property type="entry name" value="ARM_REPEAT"/>
    <property type="match status" value="1"/>
</dbReference>
<protein>
    <recommendedName>
        <fullName>V-type proton ATPase subunit H</fullName>
        <shortName>V-ATPase subunit H</shortName>
    </recommendedName>
    <alternativeName>
        <fullName>Vacuolar proton pump subunit H</fullName>
    </alternativeName>
</protein>
<sequence length="445" mass="50790">MNFRELDTSNGVKAAESSFRTKVVLAREIPWNGFASSNSITSEQYNLISKYDKHTDAEKKEKFAANSASYVNFFVNFINSTSNIEIIQYLLTLINEIIEIDPRAAGAFSKITKDDDKSYPYSVFFRLLNREDAYTNLHASIALAQIMCAGKPTQNDVESFFNWILKLLRKNNSSEVEVGLIALQSLLLKDDFRIFFNNIDGSALLLNILQALSTSSVNIQLLYETIYAIWLLTYNKDIAAAYSGTGLVANLVQLVKTVAKEKIVRLSLSTLRNLLNNGKSNEEMIDNGFVRMLNILNIKKWGDDDIPADIEVLINGLAKDIDNMSSFNKYKTEIISGELEWTPVHKSERFWKENISKFEENNYQVIKHLHQILKTSQSTPLQLSIACHDLCEFVRHHSRGKAIMTITNQTRYHGYDVKSNEEVKNQALFALQKMMLNNWEYLNAK</sequence>
<organism>
    <name type="scientific">Dictyostelium discoideum</name>
    <name type="common">Social amoeba</name>
    <dbReference type="NCBI Taxonomy" id="44689"/>
    <lineage>
        <taxon>Eukaryota</taxon>
        <taxon>Amoebozoa</taxon>
        <taxon>Evosea</taxon>
        <taxon>Eumycetozoa</taxon>
        <taxon>Dictyostelia</taxon>
        <taxon>Dictyosteliales</taxon>
        <taxon>Dictyosteliaceae</taxon>
        <taxon>Dictyostelium</taxon>
    </lineage>
</organism>